<name>HAVR2_RAT</name>
<gene>
    <name type="primary">Havcr2</name>
    <name type="synonym">Tim3</name>
    <name type="synonym">Timd3</name>
</gene>
<keyword id="KW-1064">Adaptive immunity</keyword>
<keyword id="KW-0965">Cell junction</keyword>
<keyword id="KW-1015">Disulfide bond</keyword>
<keyword id="KW-0325">Glycoprotein</keyword>
<keyword id="KW-0391">Immunity</keyword>
<keyword id="KW-0393">Immunoglobulin domain</keyword>
<keyword id="KW-0395">Inflammatory response</keyword>
<keyword id="KW-0399">Innate immunity</keyword>
<keyword id="KW-0472">Membrane</keyword>
<keyword id="KW-0479">Metal-binding</keyword>
<keyword id="KW-0597">Phosphoprotein</keyword>
<keyword id="KW-1185">Reference proteome</keyword>
<keyword id="KW-0732">Signal</keyword>
<keyword id="KW-0812">Transmembrane</keyword>
<keyword id="KW-1133">Transmembrane helix</keyword>
<proteinExistence type="evidence at transcript level"/>
<sequence length="282" mass="30641">MFSWLPFSCALLLLQPLPARSLENAYTAEVGKNAYLPCSYTVPAPGTLVPICWGKGSCPLLQCASVVLRTDETNVTYRKSRRYQLKGNFYKGDMSLTIKNVTLADSGTYCCRIQFPGPMNDEKLELKLSITEPAKVIPAGTAHGDSTTASPRTLTTEGSGSETQTLVTLHDNNGTKISTWADEIKDSGETIRTAVHIGVGVSAGLALALILGVLILKWYSSKKKKLQDLSLITLANSPPGGLVNAGAGRIRSEENIYTIEENIYEMENSNEYYCYVSSQQPS</sequence>
<accession>P0C0K5</accession>
<accession>G3V9I4</accession>
<comment type="function">
    <text evidence="1 2">Cell surface receptor implicated in modulating innate and adaptive immune responses. Generally accepted to have an inhibiting function. Reports on stimulating functions suggest that the activity may be influenced by the cellular context and/or the respective ligand. Regulates macrophage activation. Inhibits T-helper type 1 lymphocyte (Th1)-mediated auto- and alloimmune responses and promotes immunological tolerance. In CD8+ cells attenuates TCR-induced signaling, specifically by blocking NF-kappaB and NFAT promoter activities resulting in the loss of IL-2 secretion. The function may implicate its association with LCK proposed to impair phosphorylation of TCR subunits. In contrast, shown to activate TCR-induced signaling in T-cells probably implicating ZAP70, LCP2, LCK and FYN. Expressed on Treg cells can inhibit Th17 cell responses. Receptor for LGALS9. Binding to LGALS9 is believed to result in suppression of T-cell responses; the resulting apoptosis of antigen-specific cells may implicate HAVCR2 phosphorylation and disruption of its association with BAG6. Binding to LGALS9 is proposed to be involved in innate immune response to intracellular pathogens. Expressed on Th1 cells interacts with LGALS9 expressed on Mycobacterium tuberculosis-infected macrophages to stimulate antibactericidal activity including IL-1 beta secretion and to restrict intracellular bacterial growth. However, the function as receptor for LGALS9 has been challenged (By similarity). Also reported to enhance CD8+ T cell responses to an acute infection such as by Listeria monocytogenes. Receptor for phosphatidylserine (PtSer); PtSer-binding is calcium-dependent. May recognize PtSer on apoptotic cells leading to their phagocytosis. Mediates the engulfment of apoptotic cells by dendritic cells. Expressed on T-cells, promotes conjugation but not engulfment of apoptotic cells. Expressed on dendritic cells (DCs) positively regulates innate immune response and in synergy with Toll-like receptors promotes secretion of TNF-alpha. In tumor-imfiltrating DCs suppresses nucleic acid-mediated innate immune repsonse by interaction with HMGB1 and interfering with nucleic acid-sensing and trafficking of nucleid acids to endosomes. Can enhance mast cell production of Th2 cytokines Il-4, IL-6 and IL-13. Expressed on natural killer (NK) cells acts as a coreceptor to enhance IFN-gamma production in response to LGALS9. In contrast, shown to suppress NK cell-mediated cytotoxicity. Negatively regulates NK cell function in LPS-induced endotoxic shock.</text>
</comment>
<comment type="subunit">
    <text evidence="1 2">Interacts with HMGB1; impairs HMGB1 binding to B-DNA and likely HMGB1-mediated innate immune response. Interacts with BAG6. Interacts (phosphorylated) with PIK3R1 and PIK3R2. Interacts (not dependent on its phosphorylation status) with FYN. Interacts (in basal state T-cells) with VAV1; AKT1/2, LCP2, ZAP70, SYK, PIK3R1, FYN, SH3BP2 and SH2D2A. Interacts (in activated T-cells) with LCK and PLCG. Interacts with ILF3; this interaction promotes ILF3 ubiquitination and degradation.</text>
</comment>
<comment type="subcellular location">
    <subcellularLocation>
        <location evidence="6">Membrane</location>
        <topology evidence="6">Single-pass type I membrane protein</topology>
    </subcellularLocation>
    <subcellularLocation>
        <location evidence="1">Cell junction</location>
    </subcellularLocation>
    <text evidence="1">Localizes to the immunological synapse between CD8+ T-cells and target cells.</text>
</comment>
<comment type="miscellaneous">
    <text>Expression is up-regulated in the spinal cord during experimental autoimmune encephalomyelitis (EAE) and following antigen restimulation of the encephalitogenic TCRBV8S2+ population. Expression was also detected by in situ hybridization in resident cells of the nervous system.</text>
</comment>
<comment type="similarity">
    <text evidence="6">Belongs to the immunoglobulin superfamily. TIM family.</text>
</comment>
<evidence type="ECO:0000250" key="1">
    <source>
        <dbReference type="UniProtKB" id="Q8TDQ0"/>
    </source>
</evidence>
<evidence type="ECO:0000250" key="2">
    <source>
        <dbReference type="UniProtKB" id="Q8VIM0"/>
    </source>
</evidence>
<evidence type="ECO:0000255" key="3"/>
<evidence type="ECO:0000255" key="4">
    <source>
        <dbReference type="PROSITE-ProRule" id="PRU00114"/>
    </source>
</evidence>
<evidence type="ECO:0000256" key="5">
    <source>
        <dbReference type="SAM" id="MobiDB-lite"/>
    </source>
</evidence>
<evidence type="ECO:0000305" key="6"/>
<protein>
    <recommendedName>
        <fullName>Hepatitis A virus cellular receptor 2 homolog</fullName>
        <shortName>HAVcr-2</shortName>
    </recommendedName>
    <alternativeName>
        <fullName>T-cell immunoglobulin and mucin domain-containing protein 3</fullName>
        <shortName>TIMD-3</shortName>
    </alternativeName>
    <alternativeName>
        <fullName>T-cell immunoglobulin mucin receptor 3</fullName>
        <shortName>TIM-3</shortName>
    </alternativeName>
    <alternativeName>
        <fullName>T-cell membrane protein 3</fullName>
    </alternativeName>
    <cdAntigenName>CD366</cdAntigenName>
</protein>
<organism>
    <name type="scientific">Rattus norvegicus</name>
    <name type="common">Rat</name>
    <dbReference type="NCBI Taxonomy" id="10116"/>
    <lineage>
        <taxon>Eukaryota</taxon>
        <taxon>Metazoa</taxon>
        <taxon>Chordata</taxon>
        <taxon>Craniata</taxon>
        <taxon>Vertebrata</taxon>
        <taxon>Euteleostomi</taxon>
        <taxon>Mammalia</taxon>
        <taxon>Eutheria</taxon>
        <taxon>Euarchontoglires</taxon>
        <taxon>Glires</taxon>
        <taxon>Rodentia</taxon>
        <taxon>Myomorpha</taxon>
        <taxon>Muroidea</taxon>
        <taxon>Muridae</taxon>
        <taxon>Murinae</taxon>
        <taxon>Rattus</taxon>
    </lineage>
</organism>
<reference key="1">
    <citation type="submission" date="2005-07" db="EMBL/GenBank/DDBJ databases">
        <authorList>
            <person name="Mural R.J."/>
            <person name="Adams M.D."/>
            <person name="Myers E.W."/>
            <person name="Smith H.O."/>
            <person name="Venter J.C."/>
        </authorList>
    </citation>
    <scope>NUCLEOTIDE SEQUENCE [LARGE SCALE GENOMIC DNA]</scope>
    <source>
        <strain>Brown Norway</strain>
    </source>
</reference>
<reference key="2">
    <citation type="journal article" date="2004" name="Nature">
        <title>Genome sequence of the Brown Norway rat yields insights into mammalian evolution.</title>
        <authorList>
            <person name="Gibbs R.A."/>
            <person name="Weinstock G.M."/>
            <person name="Metzker M.L."/>
            <person name="Muzny D.M."/>
            <person name="Sodergren E.J."/>
            <person name="Scherer S."/>
            <person name="Scott G."/>
            <person name="Steffen D."/>
            <person name="Worley K.C."/>
            <person name="Burch P.E."/>
            <person name="Okwuonu G."/>
            <person name="Hines S."/>
            <person name="Lewis L."/>
            <person name="Deramo C."/>
            <person name="Delgado O."/>
            <person name="Dugan-Rocha S."/>
            <person name="Miner G."/>
            <person name="Morgan M."/>
            <person name="Hawes A."/>
            <person name="Gill R."/>
            <person name="Holt R.A."/>
            <person name="Adams M.D."/>
            <person name="Amanatides P.G."/>
            <person name="Baden-Tillson H."/>
            <person name="Barnstead M."/>
            <person name="Chin S."/>
            <person name="Evans C.A."/>
            <person name="Ferriera S."/>
            <person name="Fosler C."/>
            <person name="Glodek A."/>
            <person name="Gu Z."/>
            <person name="Jennings D."/>
            <person name="Kraft C.L."/>
            <person name="Nguyen T."/>
            <person name="Pfannkoch C.M."/>
            <person name="Sitter C."/>
            <person name="Sutton G.G."/>
            <person name="Venter J.C."/>
            <person name="Woodage T."/>
            <person name="Smith D."/>
            <person name="Lee H.-M."/>
            <person name="Gustafson E."/>
            <person name="Cahill P."/>
            <person name="Kana A."/>
            <person name="Doucette-Stamm L."/>
            <person name="Weinstock K."/>
            <person name="Fechtel K."/>
            <person name="Weiss R.B."/>
            <person name="Dunn D.M."/>
            <person name="Green E.D."/>
            <person name="Blakesley R.W."/>
            <person name="Bouffard G.G."/>
            <person name="De Jong P.J."/>
            <person name="Osoegawa K."/>
            <person name="Zhu B."/>
            <person name="Marra M."/>
            <person name="Schein J."/>
            <person name="Bosdet I."/>
            <person name="Fjell C."/>
            <person name="Jones S."/>
            <person name="Krzywinski M."/>
            <person name="Mathewson C."/>
            <person name="Siddiqui A."/>
            <person name="Wye N."/>
            <person name="McPherson J."/>
            <person name="Zhao S."/>
            <person name="Fraser C.M."/>
            <person name="Shetty J."/>
            <person name="Shatsman S."/>
            <person name="Geer K."/>
            <person name="Chen Y."/>
            <person name="Abramzon S."/>
            <person name="Nierman W.C."/>
            <person name="Havlak P.H."/>
            <person name="Chen R."/>
            <person name="Durbin K.J."/>
            <person name="Egan A."/>
            <person name="Ren Y."/>
            <person name="Song X.-Z."/>
            <person name="Li B."/>
            <person name="Liu Y."/>
            <person name="Qin X."/>
            <person name="Cawley S."/>
            <person name="Cooney A.J."/>
            <person name="D'Souza L.M."/>
            <person name="Martin K."/>
            <person name="Wu J.Q."/>
            <person name="Gonzalez-Garay M.L."/>
            <person name="Jackson A.R."/>
            <person name="Kalafus K.J."/>
            <person name="McLeod M.P."/>
            <person name="Milosavljevic A."/>
            <person name="Virk D."/>
            <person name="Volkov A."/>
            <person name="Wheeler D.A."/>
            <person name="Zhang Z."/>
            <person name="Bailey J.A."/>
            <person name="Eichler E.E."/>
            <person name="Tuzun E."/>
            <person name="Birney E."/>
            <person name="Mongin E."/>
            <person name="Ureta-Vidal A."/>
            <person name="Woodwark C."/>
            <person name="Zdobnov E."/>
            <person name="Bork P."/>
            <person name="Suyama M."/>
            <person name="Torrents D."/>
            <person name="Alexandersson M."/>
            <person name="Trask B.J."/>
            <person name="Young J.M."/>
            <person name="Huang H."/>
            <person name="Wang H."/>
            <person name="Xing H."/>
            <person name="Daniels S."/>
            <person name="Gietzen D."/>
            <person name="Schmidt J."/>
            <person name="Stevens K."/>
            <person name="Vitt U."/>
            <person name="Wingrove J."/>
            <person name="Camara F."/>
            <person name="Mar Alba M."/>
            <person name="Abril J.F."/>
            <person name="Guigo R."/>
            <person name="Smit A."/>
            <person name="Dubchak I."/>
            <person name="Rubin E.M."/>
            <person name="Couronne O."/>
            <person name="Poliakov A."/>
            <person name="Huebner N."/>
            <person name="Ganten D."/>
            <person name="Goesele C."/>
            <person name="Hummel O."/>
            <person name="Kreitler T."/>
            <person name="Lee Y.-A."/>
            <person name="Monti J."/>
            <person name="Schulz H."/>
            <person name="Zimdahl H."/>
            <person name="Himmelbauer H."/>
            <person name="Lehrach H."/>
            <person name="Jacob H.J."/>
            <person name="Bromberg S."/>
            <person name="Gullings-Handley J."/>
            <person name="Jensen-Seaman M.I."/>
            <person name="Kwitek A.E."/>
            <person name="Lazar J."/>
            <person name="Pasko D."/>
            <person name="Tonellato P.J."/>
            <person name="Twigger S."/>
            <person name="Ponting C.P."/>
            <person name="Duarte J.M."/>
            <person name="Rice S."/>
            <person name="Goodstadt L."/>
            <person name="Beatson S.A."/>
            <person name="Emes R.D."/>
            <person name="Winter E.E."/>
            <person name="Webber C."/>
            <person name="Brandt P."/>
            <person name="Nyakatura G."/>
            <person name="Adetobi M."/>
            <person name="Chiaromonte F."/>
            <person name="Elnitski L."/>
            <person name="Eswara P."/>
            <person name="Hardison R.C."/>
            <person name="Hou M."/>
            <person name="Kolbe D."/>
            <person name="Makova K."/>
            <person name="Miller W."/>
            <person name="Nekrutenko A."/>
            <person name="Riemer C."/>
            <person name="Schwartz S."/>
            <person name="Taylor J."/>
            <person name="Yang S."/>
            <person name="Zhang Y."/>
            <person name="Lindpaintner K."/>
            <person name="Andrews T.D."/>
            <person name="Caccamo M."/>
            <person name="Clamp M."/>
            <person name="Clarke L."/>
            <person name="Curwen V."/>
            <person name="Durbin R.M."/>
            <person name="Eyras E."/>
            <person name="Searle S.M."/>
            <person name="Cooper G.M."/>
            <person name="Batzoglou S."/>
            <person name="Brudno M."/>
            <person name="Sidow A."/>
            <person name="Stone E.A."/>
            <person name="Payseur B.A."/>
            <person name="Bourque G."/>
            <person name="Lopez-Otin C."/>
            <person name="Puente X.S."/>
            <person name="Chakrabarti K."/>
            <person name="Chatterji S."/>
            <person name="Dewey C."/>
            <person name="Pachter L."/>
            <person name="Bray N."/>
            <person name="Yap V.B."/>
            <person name="Caspi A."/>
            <person name="Tesler G."/>
            <person name="Pevzner P.A."/>
            <person name="Haussler D."/>
            <person name="Roskin K.M."/>
            <person name="Baertsch R."/>
            <person name="Clawson H."/>
            <person name="Furey T.S."/>
            <person name="Hinrichs A.S."/>
            <person name="Karolchik D."/>
            <person name="Kent W.J."/>
            <person name="Rosenbloom K.R."/>
            <person name="Trumbower H."/>
            <person name="Weirauch M."/>
            <person name="Cooper D.N."/>
            <person name="Stenson P.D."/>
            <person name="Ma B."/>
            <person name="Brent M."/>
            <person name="Arumugam M."/>
            <person name="Shteynberg D."/>
            <person name="Copley R.R."/>
            <person name="Taylor M.S."/>
            <person name="Riethman H."/>
            <person name="Mudunuri U."/>
            <person name="Peterson J."/>
            <person name="Guyer M."/>
            <person name="Felsenfeld A."/>
            <person name="Old S."/>
            <person name="Mockrin S."/>
            <person name="Collins F.S."/>
        </authorList>
    </citation>
    <scope>NUCLEOTIDE SEQUENCE [LARGE SCALE GENOMIC DNA]</scope>
    <source>
        <strain>Brown Norway</strain>
    </source>
</reference>
<reference key="3">
    <citation type="journal article" date="2004" name="J. Neuroimmunol.">
        <title>Protective DNA vaccination against experimental autoimmune encephalomyelitis is associated with induction of IFNbeta.</title>
        <authorList>
            <person name="Wefer J."/>
            <person name="Harris R.A."/>
            <person name="Lobell A."/>
        </authorList>
    </citation>
    <scope>NUCLEOTIDE SEQUENCE [MRNA] OF 22-185</scope>
    <source>
        <strain>Lewis.1AV1</strain>
        <tissue>Spleen</tissue>
    </source>
</reference>
<reference key="4">
    <citation type="journal article" date="2005" name="J. Neuroimmunol.">
        <title>Expression of T cell immunoglobulin- and mucin-domain-containing molecules-1 and -3 (TIM-1 and -3) in the rat nervous and immune systems.</title>
        <authorList>
            <person name="Gielen A.W."/>
            <person name="Lobell A."/>
            <person name="Lidman O."/>
            <person name="Khademi M."/>
            <person name="Olsson T."/>
            <person name="Piehl F."/>
        </authorList>
    </citation>
    <scope>TISSUE SPECIFICITY DURING EXPERIMENTAL AUTOIMMUNE ENCEPHALOMYELITIS</scope>
</reference>
<dbReference type="EMBL" id="CH473948">
    <property type="protein sequence ID" value="EDM04175.1"/>
    <property type="molecule type" value="Genomic_DNA"/>
</dbReference>
<dbReference type="EMBL" id="AABR07029515">
    <property type="status" value="NOT_ANNOTATED_CDS"/>
    <property type="molecule type" value="Genomic_DNA"/>
</dbReference>
<dbReference type="EMBL" id="AJ549521">
    <property type="protein sequence ID" value="CAD79372.1"/>
    <property type="molecule type" value="mRNA"/>
</dbReference>
<dbReference type="RefSeq" id="NP_001094232.1">
    <property type="nucleotide sequence ID" value="NM_001100762.1"/>
</dbReference>
<dbReference type="FunCoup" id="P0C0K5">
    <property type="interactions" value="570"/>
</dbReference>
<dbReference type="STRING" id="10116.ENSRNOP00000048351"/>
<dbReference type="GlyCosmos" id="P0C0K5">
    <property type="glycosylation" value="4 sites, No reported glycans"/>
</dbReference>
<dbReference type="GlyGen" id="P0C0K5">
    <property type="glycosylation" value="4 sites"/>
</dbReference>
<dbReference type="PhosphoSitePlus" id="P0C0K5"/>
<dbReference type="PaxDb" id="10116-ENSRNOP00000048351"/>
<dbReference type="Ensembl" id="ENSRNOT00000048485.3">
    <property type="protein sequence ID" value="ENSRNOP00000048351.2"/>
    <property type="gene ID" value="ENSRNOG00000031443.4"/>
</dbReference>
<dbReference type="GeneID" id="363578"/>
<dbReference type="KEGG" id="rno:363578"/>
<dbReference type="UCSC" id="RGD:1305233">
    <property type="organism name" value="rat"/>
</dbReference>
<dbReference type="AGR" id="RGD:1305233"/>
<dbReference type="CTD" id="84868"/>
<dbReference type="RGD" id="1305233">
    <property type="gene designation" value="Havcr2"/>
</dbReference>
<dbReference type="eggNOG" id="ENOG502S454">
    <property type="taxonomic scope" value="Eukaryota"/>
</dbReference>
<dbReference type="GeneTree" id="ENSGT00940000154444"/>
<dbReference type="InParanoid" id="P0C0K5"/>
<dbReference type="OMA" id="EHGPAET"/>
<dbReference type="OrthoDB" id="434099at2759"/>
<dbReference type="TreeFam" id="TF336163"/>
<dbReference type="PRO" id="PR:P0C0K5"/>
<dbReference type="Proteomes" id="UP000002494">
    <property type="component" value="Chromosome 10"/>
</dbReference>
<dbReference type="Proteomes" id="UP000234681">
    <property type="component" value="Chromosome 10"/>
</dbReference>
<dbReference type="Bgee" id="ENSRNOG00000031443">
    <property type="expression patterns" value="Expressed in duodenum and 10 other cell types or tissues"/>
</dbReference>
<dbReference type="GO" id="GO:0070161">
    <property type="term" value="C:anchoring junction"/>
    <property type="evidence" value="ECO:0007669"/>
    <property type="project" value="UniProtKB-SubCell"/>
</dbReference>
<dbReference type="GO" id="GO:0009986">
    <property type="term" value="C:cell surface"/>
    <property type="evidence" value="ECO:0000314"/>
    <property type="project" value="RGD"/>
</dbReference>
<dbReference type="GO" id="GO:0005769">
    <property type="term" value="C:early endosome"/>
    <property type="evidence" value="ECO:0000266"/>
    <property type="project" value="RGD"/>
</dbReference>
<dbReference type="GO" id="GO:0001772">
    <property type="term" value="C:immunological synapse"/>
    <property type="evidence" value="ECO:0000266"/>
    <property type="project" value="RGD"/>
</dbReference>
<dbReference type="GO" id="GO:0016592">
    <property type="term" value="C:mediator complex"/>
    <property type="evidence" value="ECO:0000318"/>
    <property type="project" value="GO_Central"/>
</dbReference>
<dbReference type="GO" id="GO:0005886">
    <property type="term" value="C:plasma membrane"/>
    <property type="evidence" value="ECO:0000266"/>
    <property type="project" value="RGD"/>
</dbReference>
<dbReference type="GO" id="GO:0046872">
    <property type="term" value="F:metal ion binding"/>
    <property type="evidence" value="ECO:0007669"/>
    <property type="project" value="UniProtKB-KW"/>
</dbReference>
<dbReference type="GO" id="GO:0004888">
    <property type="term" value="F:transmembrane signaling receptor activity"/>
    <property type="evidence" value="ECO:0000266"/>
    <property type="project" value="RGD"/>
</dbReference>
<dbReference type="GO" id="GO:0002250">
    <property type="term" value="P:adaptive immune response"/>
    <property type="evidence" value="ECO:0007669"/>
    <property type="project" value="UniProtKB-KW"/>
</dbReference>
<dbReference type="GO" id="GO:0071222">
    <property type="term" value="P:cellular response to lipopolysaccharide"/>
    <property type="evidence" value="ECO:0000266"/>
    <property type="project" value="RGD"/>
</dbReference>
<dbReference type="GO" id="GO:0050830">
    <property type="term" value="P:defense response to Gram-positive bacterium"/>
    <property type="evidence" value="ECO:0000266"/>
    <property type="project" value="RGD"/>
</dbReference>
<dbReference type="GO" id="GO:0006954">
    <property type="term" value="P:inflammatory response"/>
    <property type="evidence" value="ECO:0007669"/>
    <property type="project" value="UniProtKB-KW"/>
</dbReference>
<dbReference type="GO" id="GO:0045087">
    <property type="term" value="P:innate immune response"/>
    <property type="evidence" value="ECO:0007669"/>
    <property type="project" value="UniProtKB-KW"/>
</dbReference>
<dbReference type="GO" id="GO:0002281">
    <property type="term" value="P:macrophage activation involved in immune response"/>
    <property type="evidence" value="ECO:0000266"/>
    <property type="project" value="RGD"/>
</dbReference>
<dbReference type="GO" id="GO:0060135">
    <property type="term" value="P:maternal process involved in female pregnancy"/>
    <property type="evidence" value="ECO:0000266"/>
    <property type="project" value="RGD"/>
</dbReference>
<dbReference type="GO" id="GO:0002519">
    <property type="term" value="P:natural killer cell tolerance induction"/>
    <property type="evidence" value="ECO:0000266"/>
    <property type="project" value="RGD"/>
</dbReference>
<dbReference type="GO" id="GO:1900425">
    <property type="term" value="P:negative regulation of defense response to bacterium"/>
    <property type="evidence" value="ECO:0000266"/>
    <property type="project" value="RGD"/>
</dbReference>
<dbReference type="GO" id="GO:0010629">
    <property type="term" value="P:negative regulation of gene expression"/>
    <property type="evidence" value="ECO:0000266"/>
    <property type="project" value="RGD"/>
</dbReference>
<dbReference type="GO" id="GO:0071656">
    <property type="term" value="P:negative regulation of granulocyte colony-stimulating factor production"/>
    <property type="evidence" value="ECO:0000266"/>
    <property type="project" value="RGD"/>
</dbReference>
<dbReference type="GO" id="GO:0002838">
    <property type="term" value="P:negative regulation of immune response to tumor cell"/>
    <property type="evidence" value="ECO:0000266"/>
    <property type="project" value="RGD"/>
</dbReference>
<dbReference type="GO" id="GO:2000521">
    <property type="term" value="P:negative regulation of immunological synapse formation"/>
    <property type="evidence" value="ECO:0000266"/>
    <property type="project" value="RGD"/>
</dbReference>
<dbReference type="GO" id="GO:0045824">
    <property type="term" value="P:negative regulation of innate immune response"/>
    <property type="evidence" value="ECO:0000266"/>
    <property type="project" value="RGD"/>
</dbReference>
<dbReference type="GO" id="GO:0032687">
    <property type="term" value="P:negative regulation of interferon-alpha production"/>
    <property type="evidence" value="ECO:0000266"/>
    <property type="project" value="RGD"/>
</dbReference>
<dbReference type="GO" id="GO:0032703">
    <property type="term" value="P:negative regulation of interleukin-2 production"/>
    <property type="evidence" value="ECO:0000266"/>
    <property type="project" value="RGD"/>
</dbReference>
<dbReference type="GO" id="GO:0032712">
    <property type="term" value="P:negative regulation of interleukin-3 production"/>
    <property type="evidence" value="ECO:0000266"/>
    <property type="project" value="RGD"/>
</dbReference>
<dbReference type="GO" id="GO:0032715">
    <property type="term" value="P:negative regulation of interleukin-6 production"/>
    <property type="evidence" value="ECO:0000266"/>
    <property type="project" value="RGD"/>
</dbReference>
<dbReference type="GO" id="GO:0030886">
    <property type="term" value="P:negative regulation of myeloid dendritic cell activation"/>
    <property type="evidence" value="ECO:0000266"/>
    <property type="project" value="RGD"/>
</dbReference>
<dbReference type="GO" id="GO:0032815">
    <property type="term" value="P:negative regulation of natural killer cell activation"/>
    <property type="evidence" value="ECO:0000266"/>
    <property type="project" value="RGD"/>
</dbReference>
<dbReference type="GO" id="GO:0002859">
    <property type="term" value="P:negative regulation of natural killer cell mediated cytotoxicity directed against tumor cell target"/>
    <property type="evidence" value="ECO:0000266"/>
    <property type="project" value="RGD"/>
</dbReference>
<dbReference type="GO" id="GO:2001189">
    <property type="term" value="P:negative regulation of T cell activation via T cell receptor contact with antigen bound to MHC molecule on antigen presenting cell"/>
    <property type="evidence" value="ECO:0000266"/>
    <property type="project" value="RGD"/>
</dbReference>
<dbReference type="GO" id="GO:0042130">
    <property type="term" value="P:negative regulation of T cell proliferation"/>
    <property type="evidence" value="ECO:0000266"/>
    <property type="project" value="RGD"/>
</dbReference>
<dbReference type="GO" id="GO:0002826">
    <property type="term" value="P:negative regulation of T-helper 1 type immune response"/>
    <property type="evidence" value="ECO:0000266"/>
    <property type="project" value="RGD"/>
</dbReference>
<dbReference type="GO" id="GO:0032720">
    <property type="term" value="P:negative regulation of tumor necrosis factor production"/>
    <property type="evidence" value="ECO:0000266"/>
    <property type="project" value="RGD"/>
</dbReference>
<dbReference type="GO" id="GO:0032480">
    <property type="term" value="P:negative regulation of type I interferon production"/>
    <property type="evidence" value="ECO:0000266"/>
    <property type="project" value="RGD"/>
</dbReference>
<dbReference type="GO" id="GO:0032689">
    <property type="term" value="P:negative regulation of type II interferon production"/>
    <property type="evidence" value="ECO:0000266"/>
    <property type="project" value="RGD"/>
</dbReference>
<dbReference type="GO" id="GO:0032722">
    <property type="term" value="P:positive regulation of chemokine production"/>
    <property type="evidence" value="ECO:0000266"/>
    <property type="project" value="RGD"/>
</dbReference>
<dbReference type="GO" id="GO:0001819">
    <property type="term" value="P:positive regulation of cytokine production"/>
    <property type="evidence" value="ECO:0000266"/>
    <property type="project" value="RGD"/>
</dbReference>
<dbReference type="GO" id="GO:1900426">
    <property type="term" value="P:positive regulation of defense response to bacterium"/>
    <property type="evidence" value="ECO:0000266"/>
    <property type="project" value="RGD"/>
</dbReference>
<dbReference type="GO" id="GO:0070374">
    <property type="term" value="P:positive regulation of ERK1 and ERK2 cascade"/>
    <property type="evidence" value="ECO:0000266"/>
    <property type="project" value="RGD"/>
</dbReference>
<dbReference type="GO" id="GO:0045089">
    <property type="term" value="P:positive regulation of innate immune response"/>
    <property type="evidence" value="ECO:0000266"/>
    <property type="project" value="RGD"/>
</dbReference>
<dbReference type="GO" id="GO:0032732">
    <property type="term" value="P:positive regulation of interleukin-1 production"/>
    <property type="evidence" value="ECO:0000266"/>
    <property type="project" value="RGD"/>
</dbReference>
<dbReference type="GO" id="GO:0032753">
    <property type="term" value="P:positive regulation of interleukin-4 production"/>
    <property type="evidence" value="ECO:0000266"/>
    <property type="project" value="RGD"/>
</dbReference>
<dbReference type="GO" id="GO:0043032">
    <property type="term" value="P:positive regulation of macrophage activation"/>
    <property type="evidence" value="ECO:0000266"/>
    <property type="project" value="RGD"/>
</dbReference>
<dbReference type="GO" id="GO:1901224">
    <property type="term" value="P:positive regulation of non-canonical NF-kappaB signal transduction"/>
    <property type="evidence" value="ECO:0000266"/>
    <property type="project" value="RGD"/>
</dbReference>
<dbReference type="GO" id="GO:0042102">
    <property type="term" value="P:positive regulation of T cell proliferation"/>
    <property type="evidence" value="ECO:0000266"/>
    <property type="project" value="RGD"/>
</dbReference>
<dbReference type="GO" id="GO:0032760">
    <property type="term" value="P:positive regulation of tumor necrosis factor production"/>
    <property type="evidence" value="ECO:0000266"/>
    <property type="project" value="RGD"/>
</dbReference>
<dbReference type="GO" id="GO:0032729">
    <property type="term" value="P:positive regulation of type II interferon production"/>
    <property type="evidence" value="ECO:0000266"/>
    <property type="project" value="RGD"/>
</dbReference>
<dbReference type="GO" id="GO:0002652">
    <property type="term" value="P:regulation of tolerance induction dependent upon immune response"/>
    <property type="evidence" value="ECO:0000266"/>
    <property type="project" value="RGD"/>
</dbReference>
<dbReference type="GO" id="GO:0006357">
    <property type="term" value="P:regulation of transcription by RNA polymerase II"/>
    <property type="evidence" value="ECO:0000318"/>
    <property type="project" value="GO_Central"/>
</dbReference>
<dbReference type="GO" id="GO:0034138">
    <property type="term" value="P:toll-like receptor 3 signaling pathway"/>
    <property type="evidence" value="ECO:0000266"/>
    <property type="project" value="RGD"/>
</dbReference>
<dbReference type="GO" id="GO:0034154">
    <property type="term" value="P:toll-like receptor 7 signaling pathway"/>
    <property type="evidence" value="ECO:0000266"/>
    <property type="project" value="RGD"/>
</dbReference>
<dbReference type="GO" id="GO:0034162">
    <property type="term" value="P:toll-like receptor 9 signaling pathway"/>
    <property type="evidence" value="ECO:0000266"/>
    <property type="project" value="RGD"/>
</dbReference>
<dbReference type="CDD" id="cd20982">
    <property type="entry name" value="IgV_TIM-3_like"/>
    <property type="match status" value="1"/>
</dbReference>
<dbReference type="FunFam" id="2.60.40.10:FF:000774">
    <property type="entry name" value="Hepatitis A virus cellular receptor 1"/>
    <property type="match status" value="1"/>
</dbReference>
<dbReference type="Gene3D" id="2.60.40.10">
    <property type="entry name" value="Immunoglobulins"/>
    <property type="match status" value="1"/>
</dbReference>
<dbReference type="InterPro" id="IPR007110">
    <property type="entry name" value="Ig-like_dom"/>
</dbReference>
<dbReference type="InterPro" id="IPR036179">
    <property type="entry name" value="Ig-like_dom_sf"/>
</dbReference>
<dbReference type="InterPro" id="IPR013783">
    <property type="entry name" value="Ig-like_fold"/>
</dbReference>
<dbReference type="InterPro" id="IPR003599">
    <property type="entry name" value="Ig_sub"/>
</dbReference>
<dbReference type="InterPro" id="IPR013106">
    <property type="entry name" value="Ig_V-set"/>
</dbReference>
<dbReference type="InterPro" id="IPR051669">
    <property type="entry name" value="Immune_Mod/Transcr_Coactivator"/>
</dbReference>
<dbReference type="PANTHER" id="PTHR15498:SF73">
    <property type="entry name" value="HEPATITIS A VIRUS CELLULAR RECEPTOR 2"/>
    <property type="match status" value="1"/>
</dbReference>
<dbReference type="PANTHER" id="PTHR15498">
    <property type="entry name" value="T-CELL IMMUNOGLOBULIN AND MUCIN DOMAIN CONTAINING TIM"/>
    <property type="match status" value="1"/>
</dbReference>
<dbReference type="Pfam" id="PF07686">
    <property type="entry name" value="V-set"/>
    <property type="match status" value="1"/>
</dbReference>
<dbReference type="SMART" id="SM00409">
    <property type="entry name" value="IG"/>
    <property type="match status" value="1"/>
</dbReference>
<dbReference type="SUPFAM" id="SSF48726">
    <property type="entry name" value="Immunoglobulin"/>
    <property type="match status" value="1"/>
</dbReference>
<dbReference type="PROSITE" id="PS50835">
    <property type="entry name" value="IG_LIKE"/>
    <property type="match status" value="1"/>
</dbReference>
<feature type="signal peptide" evidence="3">
    <location>
        <begin position="1"/>
        <end position="21"/>
    </location>
</feature>
<feature type="chain" id="PRO_0000072703" description="Hepatitis A virus cellular receptor 2 homolog">
    <location>
        <begin position="22"/>
        <end position="282"/>
    </location>
</feature>
<feature type="topological domain" description="Extracellular" evidence="3">
    <location>
        <begin position="22"/>
        <end position="194"/>
    </location>
</feature>
<feature type="transmembrane region" description="Helical" evidence="3">
    <location>
        <begin position="195"/>
        <end position="215"/>
    </location>
</feature>
<feature type="topological domain" description="Cytoplasmic" evidence="3">
    <location>
        <begin position="216"/>
        <end position="282"/>
    </location>
</feature>
<feature type="domain" description="Ig-like V-type" evidence="4">
    <location>
        <begin position="22"/>
        <end position="131"/>
    </location>
</feature>
<feature type="region of interest" description="Disordered" evidence="5">
    <location>
        <begin position="138"/>
        <end position="163"/>
    </location>
</feature>
<feature type="region of interest" description="Interaction with BAG6" evidence="2">
    <location>
        <begin position="253"/>
        <end position="271"/>
    </location>
</feature>
<feature type="compositionally biased region" description="Polar residues" evidence="5">
    <location>
        <begin position="144"/>
        <end position="163"/>
    </location>
</feature>
<feature type="binding site" evidence="2">
    <location>
        <position position="62"/>
    </location>
    <ligand>
        <name>a 1,2-diacyl-sn-glycero-3-phospho-L-serine</name>
        <dbReference type="ChEBI" id="CHEBI:57262"/>
    </ligand>
</feature>
<feature type="binding site" evidence="2">
    <location>
        <position position="112"/>
    </location>
    <ligand>
        <name>a 1,2-diacyl-sn-glycero-3-phospho-L-serine</name>
        <dbReference type="ChEBI" id="CHEBI:57262"/>
    </ligand>
</feature>
<feature type="binding site" evidence="2">
    <location>
        <position position="115"/>
    </location>
    <ligand>
        <name>Ca(2+)</name>
        <dbReference type="ChEBI" id="CHEBI:29108"/>
    </ligand>
</feature>
<feature type="binding site" evidence="2">
    <location>
        <position position="117"/>
    </location>
    <ligand>
        <name>Ca(2+)</name>
        <dbReference type="ChEBI" id="CHEBI:29108"/>
    </ligand>
</feature>
<feature type="binding site" evidence="2">
    <location>
        <position position="119"/>
    </location>
    <ligand>
        <name>a 1,2-diacyl-sn-glycero-3-phospho-L-serine</name>
        <dbReference type="ChEBI" id="CHEBI:57262"/>
    </ligand>
</feature>
<feature type="binding site" evidence="2">
    <location>
        <position position="120"/>
    </location>
    <ligand>
        <name>Ca(2+)</name>
        <dbReference type="ChEBI" id="CHEBI:29108"/>
    </ligand>
</feature>
<feature type="modified residue" description="Phosphotyrosine; by ITK" evidence="1">
    <location>
        <position position="257"/>
    </location>
</feature>
<feature type="glycosylation site" description="N-linked (GlcNAc...) asparagine" evidence="3">
    <location>
        <position position="74"/>
    </location>
</feature>
<feature type="glycosylation site" description="N-linked (GlcNAc...) asparagine" evidence="3">
    <location>
        <position position="100"/>
    </location>
</feature>
<feature type="glycosylation site" description="O-linked (GalNAc...) threonine" evidence="1">
    <location>
        <position position="147"/>
    </location>
</feature>
<feature type="glycosylation site" description="N-linked (GlcNAc...) asparagine" evidence="3">
    <location>
        <position position="173"/>
    </location>
</feature>
<feature type="disulfide bond" evidence="2 4">
    <location>
        <begin position="38"/>
        <end position="111"/>
    </location>
</feature>
<feature type="disulfide bond" evidence="2 4">
    <location>
        <begin position="52"/>
        <end position="63"/>
    </location>
</feature>
<feature type="disulfide bond" evidence="2 4">
    <location>
        <begin position="58"/>
        <end position="110"/>
    </location>
</feature>